<proteinExistence type="inferred from homology"/>
<accession>Q8FUT3</accession>
<accession>G0KED3</accession>
<gene>
    <name evidence="1" type="primary">flbT</name>
    <name type="ordered locus">BRA1135</name>
    <name type="ordered locus">BS1330_II1126</name>
</gene>
<reference key="1">
    <citation type="journal article" date="2002" name="Proc. Natl. Acad. Sci. U.S.A.">
        <title>The Brucella suis genome reveals fundamental similarities between animal and plant pathogens and symbionts.</title>
        <authorList>
            <person name="Paulsen I.T."/>
            <person name="Seshadri R."/>
            <person name="Nelson K.E."/>
            <person name="Eisen J.A."/>
            <person name="Heidelberg J.F."/>
            <person name="Read T.D."/>
            <person name="Dodson R.J."/>
            <person name="Umayam L.A."/>
            <person name="Brinkac L.M."/>
            <person name="Beanan M.J."/>
            <person name="Daugherty S.C."/>
            <person name="DeBoy R.T."/>
            <person name="Durkin A.S."/>
            <person name="Kolonay J.F."/>
            <person name="Madupu R."/>
            <person name="Nelson W.C."/>
            <person name="Ayodeji B."/>
            <person name="Kraul M."/>
            <person name="Shetty J."/>
            <person name="Malek J.A."/>
            <person name="Van Aken S.E."/>
            <person name="Riedmuller S."/>
            <person name="Tettelin H."/>
            <person name="Gill S.R."/>
            <person name="White O."/>
            <person name="Salzberg S.L."/>
            <person name="Hoover D.L."/>
            <person name="Lindler L.E."/>
            <person name="Halling S.M."/>
            <person name="Boyle S.M."/>
            <person name="Fraser C.M."/>
        </authorList>
    </citation>
    <scope>NUCLEOTIDE SEQUENCE [LARGE SCALE GENOMIC DNA]</scope>
    <source>
        <strain>1330</strain>
    </source>
</reference>
<reference key="2">
    <citation type="journal article" date="2011" name="J. Bacteriol.">
        <title>Revised genome sequence of Brucella suis 1330.</title>
        <authorList>
            <person name="Tae H."/>
            <person name="Shallom S."/>
            <person name="Settlage R."/>
            <person name="Preston D."/>
            <person name="Adams L.G."/>
            <person name="Garner H.R."/>
        </authorList>
    </citation>
    <scope>NUCLEOTIDE SEQUENCE [LARGE SCALE GENOMIC DNA]</scope>
    <source>
        <strain>1330</strain>
    </source>
</reference>
<name>FLBT_BRUSU</name>
<comment type="function">
    <text evidence="1">Has a post-transcriptional repressor function in flagellum biogenesis. Associates with the 5'-UTR of fljK mRNA and promotes its degradation.</text>
</comment>
<comment type="similarity">
    <text evidence="1">Belongs to the FlbT family.</text>
</comment>
<comment type="caution">
    <text evidence="2">Brucella species display species-specific inactivation of flagellar genes and are consequently nonmotile.</text>
</comment>
<organism>
    <name type="scientific">Brucella suis biovar 1 (strain 1330)</name>
    <dbReference type="NCBI Taxonomy" id="204722"/>
    <lineage>
        <taxon>Bacteria</taxon>
        <taxon>Pseudomonadati</taxon>
        <taxon>Pseudomonadota</taxon>
        <taxon>Alphaproteobacteria</taxon>
        <taxon>Hyphomicrobiales</taxon>
        <taxon>Brucellaceae</taxon>
        <taxon>Brucella/Ochrobactrum group</taxon>
        <taxon>Brucella</taxon>
    </lineage>
</organism>
<sequence length="152" mass="16799">MAANSKTAIRLSLRAGERIFINGAVLRADRKVSLELLNDATFLLENHVLQPEDTTTPLRQLYFAAQMMLIEPAMREQAGATFAQMLKGMFATFKDAEILNALKLVDELVHNGRVFEALKTIRAQYPREAELMGAQPVVWPVTKSGKSAGANP</sequence>
<protein>
    <recommendedName>
        <fullName evidence="1">Probable flagellum biosynthesis repressor protein FlbT</fullName>
    </recommendedName>
</protein>
<keyword id="KW-1005">Bacterial flagellum biogenesis</keyword>
<keyword id="KW-0678">Repressor</keyword>
<keyword id="KW-0694">RNA-binding</keyword>
<feature type="chain" id="PRO_0000217154" description="Probable flagellum biosynthesis repressor protein FlbT">
    <location>
        <begin position="1"/>
        <end position="152"/>
    </location>
</feature>
<dbReference type="EMBL" id="AE014292">
    <property type="protein sequence ID" value="AAN34295.1"/>
    <property type="molecule type" value="Genomic_DNA"/>
</dbReference>
<dbReference type="EMBL" id="CP002998">
    <property type="protein sequence ID" value="AEM20571.1"/>
    <property type="molecule type" value="Genomic_DNA"/>
</dbReference>
<dbReference type="PIR" id="AI3529">
    <property type="entry name" value="AI3529"/>
</dbReference>
<dbReference type="RefSeq" id="WP_004680988.1">
    <property type="nucleotide sequence ID" value="NZ_KN046805.1"/>
</dbReference>
<dbReference type="GeneID" id="97535830"/>
<dbReference type="KEGG" id="bms:BRA1135"/>
<dbReference type="KEGG" id="bsi:BS1330_II1126"/>
<dbReference type="PATRIC" id="fig|204722.21.peg.215"/>
<dbReference type="HOGENOM" id="CLU_130913_1_0_5"/>
<dbReference type="PhylomeDB" id="Q8FUT3"/>
<dbReference type="Proteomes" id="UP000007104">
    <property type="component" value="Chromosome II"/>
</dbReference>
<dbReference type="GO" id="GO:0048027">
    <property type="term" value="F:mRNA 5'-UTR binding"/>
    <property type="evidence" value="ECO:0007669"/>
    <property type="project" value="UniProtKB-UniRule"/>
</dbReference>
<dbReference type="GO" id="GO:0044781">
    <property type="term" value="P:bacterial-type flagellum organization"/>
    <property type="evidence" value="ECO:0007669"/>
    <property type="project" value="UniProtKB-KW"/>
</dbReference>
<dbReference type="GO" id="GO:0006402">
    <property type="term" value="P:mRNA catabolic process"/>
    <property type="evidence" value="ECO:0007669"/>
    <property type="project" value="InterPro"/>
</dbReference>
<dbReference type="GO" id="GO:1902209">
    <property type="term" value="P:negative regulation of bacterial-type flagellum assembly"/>
    <property type="evidence" value="ECO:0007669"/>
    <property type="project" value="UniProtKB-UniRule"/>
</dbReference>
<dbReference type="HAMAP" id="MF_00783">
    <property type="entry name" value="FlbT"/>
    <property type="match status" value="1"/>
</dbReference>
<dbReference type="InterPro" id="IPR009967">
    <property type="entry name" value="Flagellum_FlbT"/>
</dbReference>
<dbReference type="NCBIfam" id="NF001995">
    <property type="entry name" value="PRK00794.1-1"/>
    <property type="match status" value="1"/>
</dbReference>
<dbReference type="Pfam" id="PF07378">
    <property type="entry name" value="FlbT"/>
    <property type="match status" value="1"/>
</dbReference>
<dbReference type="PIRSF" id="PIRSF009533">
    <property type="entry name" value="FlbT"/>
    <property type="match status" value="1"/>
</dbReference>
<evidence type="ECO:0000255" key="1">
    <source>
        <dbReference type="HAMAP-Rule" id="MF_00783"/>
    </source>
</evidence>
<evidence type="ECO:0000305" key="2"/>